<reference key="1">
    <citation type="journal article" date="1998" name="Nature">
        <title>Analysis of 1.9 Mb of contiguous sequence from chromosome 4 of Arabidopsis thaliana.</title>
        <authorList>
            <person name="Bevan M."/>
            <person name="Bancroft I."/>
            <person name="Bent E."/>
            <person name="Love K."/>
            <person name="Goodman H.M."/>
            <person name="Dean C."/>
            <person name="Bergkamp R."/>
            <person name="Dirkse W."/>
            <person name="van Staveren M."/>
            <person name="Stiekema W."/>
            <person name="Drost L."/>
            <person name="Ridley P."/>
            <person name="Hudson S.-A."/>
            <person name="Patel K."/>
            <person name="Murphy G."/>
            <person name="Piffanelli P."/>
            <person name="Wedler H."/>
            <person name="Wedler E."/>
            <person name="Wambutt R."/>
            <person name="Weitzenegger T."/>
            <person name="Pohl T."/>
            <person name="Terryn N."/>
            <person name="Gielen J."/>
            <person name="Villarroel R."/>
            <person name="De Clercq R."/>
            <person name="van Montagu M."/>
            <person name="Lecharny A."/>
            <person name="Aubourg S."/>
            <person name="Gy I."/>
            <person name="Kreis M."/>
            <person name="Lao N."/>
            <person name="Kavanagh T."/>
            <person name="Hempel S."/>
            <person name="Kotter P."/>
            <person name="Entian K.-D."/>
            <person name="Rieger M."/>
            <person name="Schaefer M."/>
            <person name="Funk B."/>
            <person name="Mueller-Auer S."/>
            <person name="Silvey M."/>
            <person name="James R."/>
            <person name="Monfort A."/>
            <person name="Pons A."/>
            <person name="Puigdomenech P."/>
            <person name="Douka A."/>
            <person name="Voukelatou E."/>
            <person name="Milioni D."/>
            <person name="Hatzopoulos P."/>
            <person name="Piravandi E."/>
            <person name="Obermaier B."/>
            <person name="Hilbert H."/>
            <person name="Duesterhoeft A."/>
            <person name="Moores T."/>
            <person name="Jones J.D.G."/>
            <person name="Eneva T."/>
            <person name="Palme K."/>
            <person name="Benes V."/>
            <person name="Rechmann S."/>
            <person name="Ansorge W."/>
            <person name="Cooke R."/>
            <person name="Berger C."/>
            <person name="Delseny M."/>
            <person name="Voet M."/>
            <person name="Volckaert G."/>
            <person name="Mewes H.-W."/>
            <person name="Klosterman S."/>
            <person name="Schueller C."/>
            <person name="Chalwatzis N."/>
        </authorList>
    </citation>
    <scope>NUCLEOTIDE SEQUENCE [LARGE SCALE GENOMIC DNA]</scope>
    <source>
        <strain>cv. Columbia</strain>
    </source>
</reference>
<reference key="2">
    <citation type="journal article" date="1999" name="Nature">
        <title>Sequence and analysis of chromosome 4 of the plant Arabidopsis thaliana.</title>
        <authorList>
            <person name="Mayer K.F.X."/>
            <person name="Schueller C."/>
            <person name="Wambutt R."/>
            <person name="Murphy G."/>
            <person name="Volckaert G."/>
            <person name="Pohl T."/>
            <person name="Duesterhoeft A."/>
            <person name="Stiekema W."/>
            <person name="Entian K.-D."/>
            <person name="Terryn N."/>
            <person name="Harris B."/>
            <person name="Ansorge W."/>
            <person name="Brandt P."/>
            <person name="Grivell L.A."/>
            <person name="Rieger M."/>
            <person name="Weichselgartner M."/>
            <person name="de Simone V."/>
            <person name="Obermaier B."/>
            <person name="Mache R."/>
            <person name="Mueller M."/>
            <person name="Kreis M."/>
            <person name="Delseny M."/>
            <person name="Puigdomenech P."/>
            <person name="Watson M."/>
            <person name="Schmidtheini T."/>
            <person name="Reichert B."/>
            <person name="Portetelle D."/>
            <person name="Perez-Alonso M."/>
            <person name="Boutry M."/>
            <person name="Bancroft I."/>
            <person name="Vos P."/>
            <person name="Hoheisel J."/>
            <person name="Zimmermann W."/>
            <person name="Wedler H."/>
            <person name="Ridley P."/>
            <person name="Langham S.-A."/>
            <person name="McCullagh B."/>
            <person name="Bilham L."/>
            <person name="Robben J."/>
            <person name="van der Schueren J."/>
            <person name="Grymonprez B."/>
            <person name="Chuang Y.-J."/>
            <person name="Vandenbussche F."/>
            <person name="Braeken M."/>
            <person name="Weltjens I."/>
            <person name="Voet M."/>
            <person name="Bastiaens I."/>
            <person name="Aert R."/>
            <person name="Defoor E."/>
            <person name="Weitzenegger T."/>
            <person name="Bothe G."/>
            <person name="Ramsperger U."/>
            <person name="Hilbert H."/>
            <person name="Braun M."/>
            <person name="Holzer E."/>
            <person name="Brandt A."/>
            <person name="Peters S."/>
            <person name="van Staveren M."/>
            <person name="Dirkse W."/>
            <person name="Mooijman P."/>
            <person name="Klein Lankhorst R."/>
            <person name="Rose M."/>
            <person name="Hauf J."/>
            <person name="Koetter P."/>
            <person name="Berneiser S."/>
            <person name="Hempel S."/>
            <person name="Feldpausch M."/>
            <person name="Lamberth S."/>
            <person name="Van den Daele H."/>
            <person name="De Keyser A."/>
            <person name="Buysshaert C."/>
            <person name="Gielen J."/>
            <person name="Villarroel R."/>
            <person name="De Clercq R."/>
            <person name="van Montagu M."/>
            <person name="Rogers J."/>
            <person name="Cronin A."/>
            <person name="Quail M.A."/>
            <person name="Bray-Allen S."/>
            <person name="Clark L."/>
            <person name="Doggett J."/>
            <person name="Hall S."/>
            <person name="Kay M."/>
            <person name="Lennard N."/>
            <person name="McLay K."/>
            <person name="Mayes R."/>
            <person name="Pettett A."/>
            <person name="Rajandream M.A."/>
            <person name="Lyne M."/>
            <person name="Benes V."/>
            <person name="Rechmann S."/>
            <person name="Borkova D."/>
            <person name="Bloecker H."/>
            <person name="Scharfe M."/>
            <person name="Grimm M."/>
            <person name="Loehnert T.-H."/>
            <person name="Dose S."/>
            <person name="de Haan M."/>
            <person name="Maarse A.C."/>
            <person name="Schaefer M."/>
            <person name="Mueller-Auer S."/>
            <person name="Gabel C."/>
            <person name="Fuchs M."/>
            <person name="Fartmann B."/>
            <person name="Granderath K."/>
            <person name="Dauner D."/>
            <person name="Herzl A."/>
            <person name="Neumann S."/>
            <person name="Argiriou A."/>
            <person name="Vitale D."/>
            <person name="Liguori R."/>
            <person name="Piravandi E."/>
            <person name="Massenet O."/>
            <person name="Quigley F."/>
            <person name="Clabauld G."/>
            <person name="Muendlein A."/>
            <person name="Felber R."/>
            <person name="Schnabl S."/>
            <person name="Hiller R."/>
            <person name="Schmidt W."/>
            <person name="Lecharny A."/>
            <person name="Aubourg S."/>
            <person name="Chefdor F."/>
            <person name="Cooke R."/>
            <person name="Berger C."/>
            <person name="Monfort A."/>
            <person name="Casacuberta E."/>
            <person name="Gibbons T."/>
            <person name="Weber N."/>
            <person name="Vandenbol M."/>
            <person name="Bargues M."/>
            <person name="Terol J."/>
            <person name="Torres A."/>
            <person name="Perez-Perez A."/>
            <person name="Purnelle B."/>
            <person name="Bent E."/>
            <person name="Johnson S."/>
            <person name="Tacon D."/>
            <person name="Jesse T."/>
            <person name="Heijnen L."/>
            <person name="Schwarz S."/>
            <person name="Scholler P."/>
            <person name="Heber S."/>
            <person name="Francs P."/>
            <person name="Bielke C."/>
            <person name="Frishman D."/>
            <person name="Haase D."/>
            <person name="Lemcke K."/>
            <person name="Mewes H.-W."/>
            <person name="Stocker S."/>
            <person name="Zaccaria P."/>
            <person name="Bevan M."/>
            <person name="Wilson R.K."/>
            <person name="de la Bastide M."/>
            <person name="Habermann K."/>
            <person name="Parnell L."/>
            <person name="Dedhia N."/>
            <person name="Gnoj L."/>
            <person name="Schutz K."/>
            <person name="Huang E."/>
            <person name="Spiegel L."/>
            <person name="Sekhon M."/>
            <person name="Murray J."/>
            <person name="Sheet P."/>
            <person name="Cordes M."/>
            <person name="Abu-Threideh J."/>
            <person name="Stoneking T."/>
            <person name="Kalicki J."/>
            <person name="Graves T."/>
            <person name="Harmon G."/>
            <person name="Edwards J."/>
            <person name="Latreille P."/>
            <person name="Courtney L."/>
            <person name="Cloud J."/>
            <person name="Abbott A."/>
            <person name="Scott K."/>
            <person name="Johnson D."/>
            <person name="Minx P."/>
            <person name="Bentley D."/>
            <person name="Fulton B."/>
            <person name="Miller N."/>
            <person name="Greco T."/>
            <person name="Kemp K."/>
            <person name="Kramer J."/>
            <person name="Fulton L."/>
            <person name="Mardis E."/>
            <person name="Dante M."/>
            <person name="Pepin K."/>
            <person name="Hillier L.W."/>
            <person name="Nelson J."/>
            <person name="Spieth J."/>
            <person name="Ryan E."/>
            <person name="Andrews S."/>
            <person name="Geisel C."/>
            <person name="Layman D."/>
            <person name="Du H."/>
            <person name="Ali J."/>
            <person name="Berghoff A."/>
            <person name="Jones K."/>
            <person name="Drone K."/>
            <person name="Cotton M."/>
            <person name="Joshu C."/>
            <person name="Antonoiu B."/>
            <person name="Zidanic M."/>
            <person name="Strong C."/>
            <person name="Sun H."/>
            <person name="Lamar B."/>
            <person name="Yordan C."/>
            <person name="Ma P."/>
            <person name="Zhong J."/>
            <person name="Preston R."/>
            <person name="Vil D."/>
            <person name="Shekher M."/>
            <person name="Matero A."/>
            <person name="Shah R."/>
            <person name="Swaby I.K."/>
            <person name="O'Shaughnessy A."/>
            <person name="Rodriguez M."/>
            <person name="Hoffman J."/>
            <person name="Till S."/>
            <person name="Granat S."/>
            <person name="Shohdy N."/>
            <person name="Hasegawa A."/>
            <person name="Hameed A."/>
            <person name="Lodhi M."/>
            <person name="Johnson A."/>
            <person name="Chen E."/>
            <person name="Marra M.A."/>
            <person name="Martienssen R."/>
            <person name="McCombie W.R."/>
        </authorList>
    </citation>
    <scope>NUCLEOTIDE SEQUENCE [LARGE SCALE GENOMIC DNA]</scope>
    <source>
        <strain>cv. Columbia</strain>
    </source>
</reference>
<reference key="3">
    <citation type="journal article" date="2017" name="Plant J.">
        <title>Araport11: a complete reannotation of the Arabidopsis thaliana reference genome.</title>
        <authorList>
            <person name="Cheng C.Y."/>
            <person name="Krishnakumar V."/>
            <person name="Chan A.P."/>
            <person name="Thibaud-Nissen F."/>
            <person name="Schobel S."/>
            <person name="Town C.D."/>
        </authorList>
    </citation>
    <scope>GENOME REANNOTATION</scope>
    <source>
        <strain>cv. Columbia</strain>
    </source>
</reference>
<reference key="4">
    <citation type="submission" date="2004-06" db="EMBL/GenBank/DDBJ databases">
        <title>Arabidosis ORF clones.</title>
        <authorList>
            <person name="Cheuk R.F."/>
            <person name="Chen H."/>
            <person name="Kim C.J."/>
            <person name="Shinn P."/>
            <person name="Ecker J.R."/>
        </authorList>
    </citation>
    <scope>NUCLEOTIDE SEQUENCE [LARGE SCALE MRNA]</scope>
    <source>
        <strain>cv. Columbia</strain>
    </source>
</reference>
<reference key="5">
    <citation type="submission" date="2006-07" db="EMBL/GenBank/DDBJ databases">
        <title>Large-scale analysis of RIKEN Arabidopsis full-length (RAFL) cDNAs.</title>
        <authorList>
            <person name="Totoki Y."/>
            <person name="Seki M."/>
            <person name="Ishida J."/>
            <person name="Nakajima M."/>
            <person name="Enju A."/>
            <person name="Kamiya A."/>
            <person name="Narusaka M."/>
            <person name="Shin-i T."/>
            <person name="Nakagawa M."/>
            <person name="Sakamoto N."/>
            <person name="Oishi K."/>
            <person name="Kohara Y."/>
            <person name="Kobayashi M."/>
            <person name="Toyoda A."/>
            <person name="Sakaki Y."/>
            <person name="Sakurai T."/>
            <person name="Iida K."/>
            <person name="Akiyama K."/>
            <person name="Satou M."/>
            <person name="Toyoda T."/>
            <person name="Konagaya A."/>
            <person name="Carninci P."/>
            <person name="Kawai J."/>
            <person name="Hayashizaki Y."/>
            <person name="Shinozaki K."/>
        </authorList>
    </citation>
    <scope>NUCLEOTIDE SEQUENCE [LARGE SCALE MRNA]</scope>
    <source>
        <strain>cv. Columbia</strain>
    </source>
</reference>
<reference key="6">
    <citation type="journal article" date="2021" name="Planta">
        <title>Specific methylation of (11R)-carlactonoic acid by an Arabidopsis SABATH methyltransferase.</title>
        <authorList>
            <person name="Wakabayashi T."/>
            <person name="Yasuhara R."/>
            <person name="Miura K."/>
            <person name="Takikawa H."/>
            <person name="Mizutani M."/>
            <person name="Sugimoto Y."/>
        </authorList>
    </citation>
    <scope>FUNCTION</scope>
    <scope>CATALYTIC ACTIVITY</scope>
    <scope>BIOPHYSICOCHEMICAL PROPERTIES</scope>
    <source>
        <strain>cv. Columbia</strain>
    </source>
</reference>
<keyword id="KW-0460">Magnesium</keyword>
<keyword id="KW-0479">Metal-binding</keyword>
<keyword id="KW-0489">Methyltransferase</keyword>
<keyword id="KW-1185">Reference proteome</keyword>
<keyword id="KW-0949">S-adenosyl-L-methionine</keyword>
<keyword id="KW-0808">Transferase</keyword>
<protein>
    <recommendedName>
        <fullName evidence="6">Carlactonoate CLA methyltransferase</fullName>
        <shortName evidence="6">CLA methyltransferase</shortName>
        <ecNumber evidence="5">2.1.1.-</ecNumber>
    </recommendedName>
</protein>
<gene>
    <name evidence="6" type="primary">CLAMT</name>
    <name evidence="8" type="ordered locus">At4g36470</name>
    <name evidence="10" type="ORF">AP22.82</name>
    <name evidence="9" type="ORF">C7A10.890</name>
</gene>
<evidence type="ECO:0000250" key="1">
    <source>
        <dbReference type="UniProtKB" id="A0A6C0WW36"/>
    </source>
</evidence>
<evidence type="ECO:0000250" key="2">
    <source>
        <dbReference type="UniProtKB" id="B2KPR3"/>
    </source>
</evidence>
<evidence type="ECO:0000250" key="3">
    <source>
        <dbReference type="UniProtKB" id="Q6XMI3"/>
    </source>
</evidence>
<evidence type="ECO:0000250" key="4">
    <source>
        <dbReference type="UniProtKB" id="Q9FLN8"/>
    </source>
</evidence>
<evidence type="ECO:0000269" key="5">
    <source>
    </source>
</evidence>
<evidence type="ECO:0000303" key="6">
    <source>
    </source>
</evidence>
<evidence type="ECO:0000305" key="7"/>
<evidence type="ECO:0000312" key="8">
    <source>
        <dbReference type="Araport" id="AT4G36470"/>
    </source>
</evidence>
<evidence type="ECO:0000312" key="9">
    <source>
        <dbReference type="EMBL" id="CAB16845.1"/>
    </source>
</evidence>
<evidence type="ECO:0000312" key="10">
    <source>
        <dbReference type="EMBL" id="CAB80313.1"/>
    </source>
</evidence>
<name>CLAMT_ARATH</name>
<comment type="function">
    <text evidence="5">Methyltransferase involved in the biosynthesis of strigolactone natural products, bioactive compounds promoting plant fitness and soil microbe interactions, but preventing shoot branching (PubMed:34586497). Catalyzes the biosynthesis of (11R)-methyl carlactonoate (MeCLA) from (11R)-carlactonoate (CLA), downstream of MAX1; MeCLA is probably biologically active as a hormone regulating shoot branching and serves as a precursor of non-canonical strigolactones (SLs) (PubMed:34586497).</text>
</comment>
<comment type="catalytic activity">
    <reaction evidence="5">
        <text>(11R)-carlactonoate + S-adenosyl-L-methionine = (11R)-methyl carlactonoate + S-adenosyl-L-homocysteine</text>
        <dbReference type="Rhea" id="RHEA:76103"/>
        <dbReference type="ChEBI" id="CHEBI:57856"/>
        <dbReference type="ChEBI" id="CHEBI:59789"/>
        <dbReference type="ChEBI" id="CHEBI:194504"/>
        <dbReference type="ChEBI" id="CHEBI:194506"/>
    </reaction>
    <physiologicalReaction direction="left-to-right" evidence="5">
        <dbReference type="Rhea" id="RHEA:76104"/>
    </physiologicalReaction>
</comment>
<comment type="cofactor">
    <cofactor evidence="4">
        <name>Mg(2+)</name>
        <dbReference type="ChEBI" id="CHEBI:18420"/>
    </cofactor>
    <text evidence="4">Binds 1 Mg(2+) ion per subunit.</text>
</comment>
<comment type="biophysicochemical properties">
    <kinetics>
        <KM evidence="5">1.46 uM for (11R)-carlactonoate</KM>
    </kinetics>
    <phDependence>
        <text evidence="5">Optimum pH is 7.</text>
    </phDependence>
    <temperatureDependence>
        <text evidence="5">Optimum temperature is 20 degrees Celsius.</text>
    </temperatureDependence>
</comment>
<comment type="subunit">
    <text evidence="3">Homodimer.</text>
</comment>
<comment type="similarity">
    <text evidence="7">Belongs to the methyltransferase superfamily. Type-7 methyltransferase family. SABATH subfamily.</text>
</comment>
<accession>O23234</accession>
<feature type="chain" id="PRO_0000459611" description="Carlactonoate CLA methyltransferase">
    <location>
        <begin position="1"/>
        <end position="371"/>
    </location>
</feature>
<feature type="binding site" evidence="2">
    <location>
        <position position="21"/>
    </location>
    <ligand>
        <name>S-adenosyl-L-homocysteine</name>
        <dbReference type="ChEBI" id="CHEBI:57856"/>
    </ligand>
</feature>
<feature type="binding site" evidence="2">
    <location>
        <position position="28"/>
    </location>
    <ligand>
        <name>(11R)-carlactonoate</name>
        <dbReference type="ChEBI" id="CHEBI:194504"/>
    </ligand>
</feature>
<feature type="binding site" evidence="2">
    <location>
        <position position="62"/>
    </location>
    <ligand>
        <name>S-adenosyl-L-homocysteine</name>
        <dbReference type="ChEBI" id="CHEBI:57856"/>
    </ligand>
</feature>
<feature type="binding site" evidence="2">
    <location>
        <position position="67"/>
    </location>
    <ligand>
        <name>S-adenosyl-L-homocysteine</name>
        <dbReference type="ChEBI" id="CHEBI:57856"/>
    </ligand>
</feature>
<feature type="binding site" evidence="2">
    <location>
        <position position="101"/>
    </location>
    <ligand>
        <name>S-adenosyl-L-homocysteine</name>
        <dbReference type="ChEBI" id="CHEBI:57856"/>
    </ligand>
</feature>
<feature type="binding site" evidence="1">
    <location>
        <position position="102"/>
    </location>
    <ligand>
        <name>S-adenosyl-L-homocysteine</name>
        <dbReference type="ChEBI" id="CHEBI:57856"/>
    </ligand>
</feature>
<feature type="binding site" evidence="2">
    <location>
        <position position="141"/>
    </location>
    <ligand>
        <name>S-adenosyl-L-homocysteine</name>
        <dbReference type="ChEBI" id="CHEBI:57856"/>
    </ligand>
</feature>
<feature type="binding site" evidence="2">
    <location>
        <position position="142"/>
    </location>
    <ligand>
        <name>S-adenosyl-L-homocysteine</name>
        <dbReference type="ChEBI" id="CHEBI:57856"/>
    </ligand>
</feature>
<feature type="binding site" evidence="2">
    <location>
        <position position="162"/>
    </location>
    <ligand>
        <name>(11R)-carlactonoate</name>
        <dbReference type="ChEBI" id="CHEBI:194504"/>
    </ligand>
</feature>
<feature type="binding site" evidence="2">
    <location>
        <position position="163"/>
    </location>
    <ligand>
        <name>(11R)-carlactonoate</name>
        <dbReference type="ChEBI" id="CHEBI:194504"/>
    </ligand>
</feature>
<feature type="binding site" evidence="4">
    <location>
        <position position="180"/>
    </location>
    <ligand>
        <name>Mg(2+)</name>
        <dbReference type="ChEBI" id="CHEBI:18420"/>
    </ligand>
</feature>
<feature type="binding site" evidence="4">
    <location>
        <position position="266"/>
    </location>
    <ligand>
        <name>Mg(2+)</name>
        <dbReference type="ChEBI" id="CHEBI:18420"/>
    </ligand>
</feature>
<feature type="binding site" evidence="4">
    <location>
        <position position="268"/>
    </location>
    <ligand>
        <name>Mg(2+)</name>
        <dbReference type="ChEBI" id="CHEBI:18420"/>
    </ligand>
</feature>
<feature type="binding site" evidence="4">
    <location>
        <position position="269"/>
    </location>
    <ligand>
        <name>Mg(2+)</name>
        <dbReference type="ChEBI" id="CHEBI:18420"/>
    </ligand>
</feature>
<organism>
    <name type="scientific">Arabidopsis thaliana</name>
    <name type="common">Mouse-ear cress</name>
    <dbReference type="NCBI Taxonomy" id="3702"/>
    <lineage>
        <taxon>Eukaryota</taxon>
        <taxon>Viridiplantae</taxon>
        <taxon>Streptophyta</taxon>
        <taxon>Embryophyta</taxon>
        <taxon>Tracheophyta</taxon>
        <taxon>Spermatophyta</taxon>
        <taxon>Magnoliopsida</taxon>
        <taxon>eudicotyledons</taxon>
        <taxon>Gunneridae</taxon>
        <taxon>Pentapetalae</taxon>
        <taxon>rosids</taxon>
        <taxon>malvids</taxon>
        <taxon>Brassicales</taxon>
        <taxon>Brassicaceae</taxon>
        <taxon>Camelineae</taxon>
        <taxon>Arabidopsis</taxon>
    </lineage>
</organism>
<proteinExistence type="evidence at protein level"/>
<dbReference type="EC" id="2.1.1.-" evidence="5"/>
<dbReference type="EMBL" id="Z99708">
    <property type="protein sequence ID" value="CAB16845.1"/>
    <property type="molecule type" value="Genomic_DNA"/>
</dbReference>
<dbReference type="EMBL" id="AL161589">
    <property type="protein sequence ID" value="CAB80313.1"/>
    <property type="molecule type" value="Genomic_DNA"/>
</dbReference>
<dbReference type="EMBL" id="CP002687">
    <property type="protein sequence ID" value="AEE86659.1"/>
    <property type="molecule type" value="Genomic_DNA"/>
</dbReference>
<dbReference type="EMBL" id="BT014888">
    <property type="protein sequence ID" value="AAT42380.1"/>
    <property type="molecule type" value="mRNA"/>
</dbReference>
<dbReference type="EMBL" id="AK226652">
    <property type="protein sequence ID" value="BAE98762.1"/>
    <property type="molecule type" value="mRNA"/>
</dbReference>
<dbReference type="PIR" id="E85430">
    <property type="entry name" value="E85430"/>
</dbReference>
<dbReference type="RefSeq" id="NP_195365.1">
    <property type="nucleotide sequence ID" value="NM_119810.3"/>
</dbReference>
<dbReference type="SMR" id="O23234"/>
<dbReference type="STRING" id="3702.O23234"/>
<dbReference type="PaxDb" id="3702-AT4G36470.1"/>
<dbReference type="ProteomicsDB" id="191454"/>
<dbReference type="EnsemblPlants" id="AT4G36470.1">
    <property type="protein sequence ID" value="AT4G36470.1"/>
    <property type="gene ID" value="AT4G36470"/>
</dbReference>
<dbReference type="GeneID" id="829799"/>
<dbReference type="Gramene" id="AT4G36470.1">
    <property type="protein sequence ID" value="AT4G36470.1"/>
    <property type="gene ID" value="AT4G36470"/>
</dbReference>
<dbReference type="KEGG" id="ath:AT4G36470"/>
<dbReference type="Araport" id="AT4G36470"/>
<dbReference type="TAIR" id="AT4G36470"/>
<dbReference type="eggNOG" id="ENOG502QQAF">
    <property type="taxonomic scope" value="Eukaryota"/>
</dbReference>
<dbReference type="HOGENOM" id="CLU_019628_2_0_1"/>
<dbReference type="OMA" id="SWAIQWL"/>
<dbReference type="BioCyc" id="ARA:AT4G36470-MONOMER"/>
<dbReference type="PRO" id="PR:O23234"/>
<dbReference type="Proteomes" id="UP000006548">
    <property type="component" value="Chromosome 4"/>
</dbReference>
<dbReference type="ExpressionAtlas" id="O23234">
    <property type="expression patterns" value="baseline and differential"/>
</dbReference>
<dbReference type="GO" id="GO:0046872">
    <property type="term" value="F:metal ion binding"/>
    <property type="evidence" value="ECO:0007669"/>
    <property type="project" value="UniProtKB-KW"/>
</dbReference>
<dbReference type="GO" id="GO:0008757">
    <property type="term" value="F:S-adenosylmethionine-dependent methyltransferase activity"/>
    <property type="evidence" value="ECO:0000314"/>
    <property type="project" value="UniProtKB"/>
</dbReference>
<dbReference type="GO" id="GO:0032259">
    <property type="term" value="P:methylation"/>
    <property type="evidence" value="ECO:0000314"/>
    <property type="project" value="UniProtKB"/>
</dbReference>
<dbReference type="GO" id="GO:2000032">
    <property type="term" value="P:regulation of secondary shoot formation"/>
    <property type="evidence" value="ECO:0000315"/>
    <property type="project" value="UniProtKB"/>
</dbReference>
<dbReference type="GO" id="GO:1901601">
    <property type="term" value="P:strigolactone biosynthetic process"/>
    <property type="evidence" value="ECO:0000314"/>
    <property type="project" value="TAIR"/>
</dbReference>
<dbReference type="Gene3D" id="1.10.1200.270">
    <property type="entry name" value="Methyltransferase, alpha-helical capping domain"/>
    <property type="match status" value="1"/>
</dbReference>
<dbReference type="Gene3D" id="3.40.50.150">
    <property type="entry name" value="Vaccinia Virus protein VP39"/>
    <property type="match status" value="1"/>
</dbReference>
<dbReference type="InterPro" id="IPR005299">
    <property type="entry name" value="MeTrfase_7"/>
</dbReference>
<dbReference type="InterPro" id="IPR042086">
    <property type="entry name" value="MeTrfase_capping"/>
</dbReference>
<dbReference type="InterPro" id="IPR029063">
    <property type="entry name" value="SAM-dependent_MTases_sf"/>
</dbReference>
<dbReference type="PANTHER" id="PTHR31009">
    <property type="entry name" value="S-ADENOSYL-L-METHIONINE:CARBOXYL METHYLTRANSFERASE FAMILY PROTEIN"/>
    <property type="match status" value="1"/>
</dbReference>
<dbReference type="Pfam" id="PF03492">
    <property type="entry name" value="Methyltransf_7"/>
    <property type="match status" value="1"/>
</dbReference>
<dbReference type="SUPFAM" id="SSF53335">
    <property type="entry name" value="S-adenosyl-L-methionine-dependent methyltransferases"/>
    <property type="match status" value="1"/>
</dbReference>
<sequence length="371" mass="41985">MDKKDMEREFYMTGGDGKTSYARNSSLQKKASDTAKHITLETLQQLYKETRPKSLGIADLGCSSGPNTLSTITDFIKTVQVAHHREIPIQPLPEFSIFLNDLPGNDFNFIFKSLPDFHIELKRDNNNGDCPSVFIAAYPGSFYGRLFPENTIHFVYASHSLHWLSKVPTALYDEQGKSINKGCVSICSLSSEAVSKAYCSQFKEDFSIFLRCRSKEMVSAGRMVLIILGREGPDHVDRGNSFFWELLSRSIADLVAQGETEEEKLDSYDMHFYAPSADEIEGEVDKEGSFELERLEMLEVKKDKGNTEGDISYGKAVAKTVRAVQESMLVQHFGEKILDKLFDTYCRMVDDELAKEDIRPITFVVVLRKKL</sequence>